<dbReference type="EC" id="2.7.7.6" evidence="1"/>
<dbReference type="EMBL" id="CP000926">
    <property type="protein sequence ID" value="ABZ01231.1"/>
    <property type="molecule type" value="Genomic_DNA"/>
</dbReference>
<dbReference type="RefSeq" id="WP_003253383.1">
    <property type="nucleotide sequence ID" value="NC_010322.1"/>
</dbReference>
<dbReference type="SMR" id="B0KQA1"/>
<dbReference type="GeneID" id="97170669"/>
<dbReference type="KEGG" id="ppg:PputGB1_5349"/>
<dbReference type="eggNOG" id="COG1758">
    <property type="taxonomic scope" value="Bacteria"/>
</dbReference>
<dbReference type="HOGENOM" id="CLU_125406_5_2_6"/>
<dbReference type="Proteomes" id="UP000002157">
    <property type="component" value="Chromosome"/>
</dbReference>
<dbReference type="GO" id="GO:0000428">
    <property type="term" value="C:DNA-directed RNA polymerase complex"/>
    <property type="evidence" value="ECO:0007669"/>
    <property type="project" value="UniProtKB-KW"/>
</dbReference>
<dbReference type="GO" id="GO:0003677">
    <property type="term" value="F:DNA binding"/>
    <property type="evidence" value="ECO:0007669"/>
    <property type="project" value="UniProtKB-UniRule"/>
</dbReference>
<dbReference type="GO" id="GO:0003899">
    <property type="term" value="F:DNA-directed RNA polymerase activity"/>
    <property type="evidence" value="ECO:0007669"/>
    <property type="project" value="UniProtKB-UniRule"/>
</dbReference>
<dbReference type="GO" id="GO:0006351">
    <property type="term" value="P:DNA-templated transcription"/>
    <property type="evidence" value="ECO:0007669"/>
    <property type="project" value="UniProtKB-UniRule"/>
</dbReference>
<dbReference type="Gene3D" id="3.90.940.10">
    <property type="match status" value="1"/>
</dbReference>
<dbReference type="HAMAP" id="MF_00366">
    <property type="entry name" value="RNApol_bact_RpoZ"/>
    <property type="match status" value="1"/>
</dbReference>
<dbReference type="InterPro" id="IPR003716">
    <property type="entry name" value="DNA-dir_RNA_pol_omega"/>
</dbReference>
<dbReference type="InterPro" id="IPR006110">
    <property type="entry name" value="Pol_omega/Rpo6/RPB6"/>
</dbReference>
<dbReference type="InterPro" id="IPR036161">
    <property type="entry name" value="RPB6/omega-like_sf"/>
</dbReference>
<dbReference type="NCBIfam" id="TIGR00690">
    <property type="entry name" value="rpoZ"/>
    <property type="match status" value="1"/>
</dbReference>
<dbReference type="PANTHER" id="PTHR34476">
    <property type="entry name" value="DNA-DIRECTED RNA POLYMERASE SUBUNIT OMEGA"/>
    <property type="match status" value="1"/>
</dbReference>
<dbReference type="PANTHER" id="PTHR34476:SF1">
    <property type="entry name" value="DNA-DIRECTED RNA POLYMERASE SUBUNIT OMEGA"/>
    <property type="match status" value="1"/>
</dbReference>
<dbReference type="Pfam" id="PF01192">
    <property type="entry name" value="RNA_pol_Rpb6"/>
    <property type="match status" value="1"/>
</dbReference>
<dbReference type="SMART" id="SM01409">
    <property type="entry name" value="RNA_pol_Rpb6"/>
    <property type="match status" value="1"/>
</dbReference>
<dbReference type="SUPFAM" id="SSF63562">
    <property type="entry name" value="RPB6/omega subunit-like"/>
    <property type="match status" value="1"/>
</dbReference>
<sequence length="87" mass="9746">MARVTVEDCLEHVDNRFELVMLSTKRARQLATGGKEPRVAWENDKPTVVALREIAEGIVTNEFIAAEEIVTEDPVFAAFEDENNEAV</sequence>
<organism>
    <name type="scientific">Pseudomonas putida (strain GB-1)</name>
    <dbReference type="NCBI Taxonomy" id="76869"/>
    <lineage>
        <taxon>Bacteria</taxon>
        <taxon>Pseudomonadati</taxon>
        <taxon>Pseudomonadota</taxon>
        <taxon>Gammaproteobacteria</taxon>
        <taxon>Pseudomonadales</taxon>
        <taxon>Pseudomonadaceae</taxon>
        <taxon>Pseudomonas</taxon>
    </lineage>
</organism>
<reference key="1">
    <citation type="submission" date="2008-01" db="EMBL/GenBank/DDBJ databases">
        <title>Complete sequence of Pseudomonas putida GB-1.</title>
        <authorList>
            <consortium name="US DOE Joint Genome Institute"/>
            <person name="Copeland A."/>
            <person name="Lucas S."/>
            <person name="Lapidus A."/>
            <person name="Barry K."/>
            <person name="Glavina del Rio T."/>
            <person name="Dalin E."/>
            <person name="Tice H."/>
            <person name="Pitluck S."/>
            <person name="Bruce D."/>
            <person name="Goodwin L."/>
            <person name="Chertkov O."/>
            <person name="Brettin T."/>
            <person name="Detter J.C."/>
            <person name="Han C."/>
            <person name="Kuske C.R."/>
            <person name="Schmutz J."/>
            <person name="Larimer F."/>
            <person name="Land M."/>
            <person name="Hauser L."/>
            <person name="Kyrpides N."/>
            <person name="Kim E."/>
            <person name="McCarthy J.K."/>
            <person name="Richardson P."/>
        </authorList>
    </citation>
    <scope>NUCLEOTIDE SEQUENCE [LARGE SCALE GENOMIC DNA]</scope>
    <source>
        <strain>GB-1</strain>
    </source>
</reference>
<keyword id="KW-0240">DNA-directed RNA polymerase</keyword>
<keyword id="KW-0548">Nucleotidyltransferase</keyword>
<keyword id="KW-0804">Transcription</keyword>
<keyword id="KW-0808">Transferase</keyword>
<evidence type="ECO:0000255" key="1">
    <source>
        <dbReference type="HAMAP-Rule" id="MF_00366"/>
    </source>
</evidence>
<feature type="chain" id="PRO_1000079640" description="DNA-directed RNA polymerase subunit omega">
    <location>
        <begin position="1"/>
        <end position="87"/>
    </location>
</feature>
<protein>
    <recommendedName>
        <fullName evidence="1">DNA-directed RNA polymerase subunit omega</fullName>
        <shortName evidence="1">RNAP omega subunit</shortName>
        <ecNumber evidence="1">2.7.7.6</ecNumber>
    </recommendedName>
    <alternativeName>
        <fullName evidence="1">RNA polymerase omega subunit</fullName>
    </alternativeName>
    <alternativeName>
        <fullName evidence="1">Transcriptase subunit omega</fullName>
    </alternativeName>
</protein>
<accession>B0KQA1</accession>
<name>RPOZ_PSEPG</name>
<proteinExistence type="inferred from homology"/>
<comment type="function">
    <text evidence="1">Promotes RNA polymerase assembly. Latches the N- and C-terminal regions of the beta' subunit thereby facilitating its interaction with the beta and alpha subunits.</text>
</comment>
<comment type="catalytic activity">
    <reaction evidence="1">
        <text>RNA(n) + a ribonucleoside 5'-triphosphate = RNA(n+1) + diphosphate</text>
        <dbReference type="Rhea" id="RHEA:21248"/>
        <dbReference type="Rhea" id="RHEA-COMP:14527"/>
        <dbReference type="Rhea" id="RHEA-COMP:17342"/>
        <dbReference type="ChEBI" id="CHEBI:33019"/>
        <dbReference type="ChEBI" id="CHEBI:61557"/>
        <dbReference type="ChEBI" id="CHEBI:140395"/>
        <dbReference type="EC" id="2.7.7.6"/>
    </reaction>
</comment>
<comment type="subunit">
    <text evidence="1">The RNAP catalytic core consists of 2 alpha, 1 beta, 1 beta' and 1 omega subunit. When a sigma factor is associated with the core the holoenzyme is formed, which can initiate transcription.</text>
</comment>
<comment type="similarity">
    <text evidence="1">Belongs to the RNA polymerase subunit omega family.</text>
</comment>
<gene>
    <name evidence="1" type="primary">rpoZ</name>
    <name type="ordered locus">PputGB1_5349</name>
</gene>